<accession>P77733</accession>
<gene>
    <name evidence="5" type="primary">focB</name>
    <name type="ordered locus">b2492</name>
    <name type="ordered locus">JW2477</name>
</gene>
<organism>
    <name type="scientific">Escherichia coli (strain K12)</name>
    <dbReference type="NCBI Taxonomy" id="83333"/>
    <lineage>
        <taxon>Bacteria</taxon>
        <taxon>Pseudomonadati</taxon>
        <taxon>Pseudomonadota</taxon>
        <taxon>Gammaproteobacteria</taxon>
        <taxon>Enterobacterales</taxon>
        <taxon>Enterobacteriaceae</taxon>
        <taxon>Escherichia</taxon>
    </lineage>
</organism>
<evidence type="ECO:0000255" key="1"/>
<evidence type="ECO:0000269" key="2">
    <source>
    </source>
</evidence>
<evidence type="ECO:0000269" key="3">
    <source>
    </source>
</evidence>
<evidence type="ECO:0000303" key="4">
    <source>
    </source>
</evidence>
<evidence type="ECO:0000303" key="5">
    <source>
    </source>
</evidence>
<evidence type="ECO:0000305" key="6"/>
<reference key="1">
    <citation type="journal article" date="1997" name="Microbiology">
        <title>A 12-cistron Escherichia coli operon (hyf) encoding a putative proton-translocating formate hydrogenlyase system.</title>
        <authorList>
            <person name="Andrews S.C."/>
            <person name="Berks B.C."/>
            <person name="McClay J."/>
            <person name="Ambler A."/>
            <person name="Quail M.A."/>
            <person name="Golby P."/>
            <person name="Guest J.R."/>
        </authorList>
    </citation>
    <scope>NUCLEOTIDE SEQUENCE [GENOMIC DNA]</scope>
    <source>
        <strain>K12</strain>
    </source>
</reference>
<reference key="2">
    <citation type="journal article" date="1997" name="DNA Res.">
        <title>Construction of a contiguous 874-kb sequence of the Escherichia coli-K12 genome corresponding to 50.0-68.8 min on the linkage map and analysis of its sequence features.</title>
        <authorList>
            <person name="Yamamoto Y."/>
            <person name="Aiba H."/>
            <person name="Baba T."/>
            <person name="Hayashi K."/>
            <person name="Inada T."/>
            <person name="Isono K."/>
            <person name="Itoh T."/>
            <person name="Kimura S."/>
            <person name="Kitagawa M."/>
            <person name="Makino K."/>
            <person name="Miki T."/>
            <person name="Mitsuhashi N."/>
            <person name="Mizobuchi K."/>
            <person name="Mori H."/>
            <person name="Nakade S."/>
            <person name="Nakamura Y."/>
            <person name="Nashimoto H."/>
            <person name="Oshima T."/>
            <person name="Oyama S."/>
            <person name="Saito N."/>
            <person name="Sampei G."/>
            <person name="Satoh Y."/>
            <person name="Sivasundaram S."/>
            <person name="Tagami H."/>
            <person name="Takahashi H."/>
            <person name="Takeda J."/>
            <person name="Takemoto K."/>
            <person name="Uehara K."/>
            <person name="Wada C."/>
            <person name="Yamagata S."/>
            <person name="Horiuchi T."/>
        </authorList>
    </citation>
    <scope>NUCLEOTIDE SEQUENCE [LARGE SCALE GENOMIC DNA]</scope>
    <source>
        <strain>K12 / W3110 / ATCC 27325 / DSM 5911</strain>
    </source>
</reference>
<reference key="3">
    <citation type="journal article" date="1997" name="Science">
        <title>The complete genome sequence of Escherichia coli K-12.</title>
        <authorList>
            <person name="Blattner F.R."/>
            <person name="Plunkett G. III"/>
            <person name="Bloch C.A."/>
            <person name="Perna N.T."/>
            <person name="Burland V."/>
            <person name="Riley M."/>
            <person name="Collado-Vides J."/>
            <person name="Glasner J.D."/>
            <person name="Rode C.K."/>
            <person name="Mayhew G.F."/>
            <person name="Gregor J."/>
            <person name="Davis N.W."/>
            <person name="Kirkpatrick H.A."/>
            <person name="Goeden M.A."/>
            <person name="Rose D.J."/>
            <person name="Mau B."/>
            <person name="Shao Y."/>
        </authorList>
    </citation>
    <scope>NUCLEOTIDE SEQUENCE [LARGE SCALE GENOMIC DNA]</scope>
    <source>
        <strain>K12 / MG1655 / ATCC 47076</strain>
    </source>
</reference>
<reference key="4">
    <citation type="journal article" date="2006" name="Mol. Syst. Biol.">
        <title>Highly accurate genome sequences of Escherichia coli K-12 strains MG1655 and W3110.</title>
        <authorList>
            <person name="Hayashi K."/>
            <person name="Morooka N."/>
            <person name="Yamamoto Y."/>
            <person name="Fujita K."/>
            <person name="Isono K."/>
            <person name="Choi S."/>
            <person name="Ohtsubo E."/>
            <person name="Baba T."/>
            <person name="Wanner B.L."/>
            <person name="Mori H."/>
            <person name="Horiuchi T."/>
        </authorList>
    </citation>
    <scope>NUCLEOTIDE SEQUENCE [LARGE SCALE GENOMIC DNA]</scope>
    <source>
        <strain>K12 / W3110 / ATCC 27325 / DSM 5911</strain>
    </source>
</reference>
<reference key="5">
    <citation type="journal article" date="2005" name="Science">
        <title>Global topology analysis of the Escherichia coli inner membrane proteome.</title>
        <authorList>
            <person name="Daley D.O."/>
            <person name="Rapp M."/>
            <person name="Granseth E."/>
            <person name="Melen K."/>
            <person name="Drew D."/>
            <person name="von Heijne G."/>
        </authorList>
    </citation>
    <scope>SUBCELLULAR LOCATION</scope>
    <scope>TOPOLOGY</scope>
    <source>
        <strain>K12 / MG1655 / ATCC 47076</strain>
    </source>
</reference>
<reference key="6">
    <citation type="journal article" date="2018" name="FEMS Microbiol. Lett.">
        <title>pH and a mixed carbon-substrate spectrum influence FocA- and FocB-dependent, formate-driven H2 production in Escherichia coli.</title>
        <authorList>
            <person name="Hakobyan B."/>
            <person name="Pinske C."/>
            <person name="Sawers G."/>
            <person name="Trchounian A."/>
            <person name="Trchounian K."/>
        </authorList>
    </citation>
    <scope>FUNCTION</scope>
    <scope>CATALYTIC ACTIVITY</scope>
    <scope>ACTIVITY REGULATION</scope>
    <scope>DISRUPTION PHENOTYPE</scope>
    <source>
        <strain>K12</strain>
    </source>
</reference>
<sequence>MRNKLSFDLQLSARKAAIAERIAAHKIARSKVSVFLMAMSAGVFMAIGFTFYLSVIADAPSSQALTHLVGGLCFTLGFILLAVCGTSLFTSSVMTVMAKSRGVISWRTWLINALLVACGNLAGIACFSLLIWFSGLVMSENAMWGVAVLHCAEGKMHHTFTESVSLGIMCNLMVCLALWMSYCGRSLCDKIVAMILPITLFVASGFEHCIANLFVIPFAIAIRHFAPPPFWQLAHSSADNFPALTVSHFITANLLPVMLGNIIGGAVLVSMCYRAIYLRQEP</sequence>
<feature type="chain" id="PRO_0000094721" description="Formate channel FocB">
    <location>
        <begin position="1"/>
        <end position="282"/>
    </location>
</feature>
<feature type="topological domain" description="Cytoplasmic" evidence="6">
    <location>
        <begin position="1"/>
        <end position="35"/>
    </location>
</feature>
<feature type="transmembrane region" description="Helical" evidence="1">
    <location>
        <begin position="36"/>
        <end position="56"/>
    </location>
</feature>
<feature type="topological domain" description="Periplasmic" evidence="6">
    <location>
        <begin position="57"/>
        <end position="68"/>
    </location>
</feature>
<feature type="transmembrane region" description="Helical" evidence="1">
    <location>
        <begin position="69"/>
        <end position="89"/>
    </location>
</feature>
<feature type="topological domain" description="Cytoplasmic" evidence="6">
    <location>
        <begin position="90"/>
        <end position="112"/>
    </location>
</feature>
<feature type="transmembrane region" description="Helical" evidence="1">
    <location>
        <begin position="113"/>
        <end position="133"/>
    </location>
</feature>
<feature type="topological domain" description="Periplasmic" evidence="6">
    <location>
        <begin position="134"/>
        <end position="163"/>
    </location>
</feature>
<feature type="transmembrane region" description="Helical" evidence="1">
    <location>
        <begin position="164"/>
        <end position="184"/>
    </location>
</feature>
<feature type="topological domain" description="Cytoplasmic" evidence="6">
    <location>
        <begin position="185"/>
        <end position="190"/>
    </location>
</feature>
<feature type="transmembrane region" description="Helical" evidence="1">
    <location>
        <begin position="191"/>
        <end position="211"/>
    </location>
</feature>
<feature type="topological domain" description="Periplasmic" evidence="6">
    <location>
        <begin position="212"/>
        <end position="248"/>
    </location>
</feature>
<feature type="transmembrane region" description="Helical" evidence="1">
    <location>
        <begin position="249"/>
        <end position="269"/>
    </location>
</feature>
<feature type="topological domain" description="Cytoplasmic" evidence="2">
    <location>
        <begin position="270"/>
        <end position="282"/>
    </location>
</feature>
<proteinExistence type="evidence at protein level"/>
<name>FOCB_ECOLI</name>
<protein>
    <recommendedName>
        <fullName evidence="4">Formate channel FocB</fullName>
    </recommendedName>
    <alternativeName>
        <fullName evidence="6">Formate transporter FocB</fullName>
    </alternativeName>
</protein>
<dbReference type="EMBL" id="M63654">
    <property type="protein sequence ID" value="AAB88574.1"/>
    <property type="molecule type" value="Genomic_DNA"/>
</dbReference>
<dbReference type="EMBL" id="U00096">
    <property type="protein sequence ID" value="AAC75545.1"/>
    <property type="molecule type" value="Genomic_DNA"/>
</dbReference>
<dbReference type="EMBL" id="AP009048">
    <property type="protein sequence ID" value="BAA16381.1"/>
    <property type="molecule type" value="Genomic_DNA"/>
</dbReference>
<dbReference type="PIR" id="C65025">
    <property type="entry name" value="C65025"/>
</dbReference>
<dbReference type="RefSeq" id="NP_416987.1">
    <property type="nucleotide sequence ID" value="NC_000913.3"/>
</dbReference>
<dbReference type="RefSeq" id="WP_001244734.1">
    <property type="nucleotide sequence ID" value="NZ_LN832404.1"/>
</dbReference>
<dbReference type="SMR" id="P77733"/>
<dbReference type="BioGRID" id="4261432">
    <property type="interactions" value="7"/>
</dbReference>
<dbReference type="DIP" id="DIP-9671N"/>
<dbReference type="FunCoup" id="P77733">
    <property type="interactions" value="209"/>
</dbReference>
<dbReference type="IntAct" id="P77733">
    <property type="interactions" value="1"/>
</dbReference>
<dbReference type="STRING" id="511145.b2492"/>
<dbReference type="TCDB" id="1.A.16.1.2">
    <property type="family name" value="the formate-nitrite transporter (fnt) family"/>
</dbReference>
<dbReference type="PaxDb" id="511145-b2492"/>
<dbReference type="EnsemblBacteria" id="AAC75545">
    <property type="protein sequence ID" value="AAC75545"/>
    <property type="gene ID" value="b2492"/>
</dbReference>
<dbReference type="GeneID" id="949032"/>
<dbReference type="KEGG" id="ecj:JW2477"/>
<dbReference type="KEGG" id="eco:b2492"/>
<dbReference type="KEGG" id="ecoc:C3026_13825"/>
<dbReference type="PATRIC" id="fig|1411691.4.peg.4247"/>
<dbReference type="EchoBASE" id="EB3972"/>
<dbReference type="eggNOG" id="COG2116">
    <property type="taxonomic scope" value="Bacteria"/>
</dbReference>
<dbReference type="HOGENOM" id="CLU_036896_3_0_6"/>
<dbReference type="InParanoid" id="P77733"/>
<dbReference type="OMA" id="FEHTVVN"/>
<dbReference type="OrthoDB" id="9786493at2"/>
<dbReference type="PhylomeDB" id="P77733"/>
<dbReference type="BioCyc" id="EcoCyc:FOCB-MONOMER"/>
<dbReference type="BioCyc" id="MetaCyc:FOCB-MONOMER"/>
<dbReference type="PRO" id="PR:P77733"/>
<dbReference type="Proteomes" id="UP000000625">
    <property type="component" value="Chromosome"/>
</dbReference>
<dbReference type="GO" id="GO:0005886">
    <property type="term" value="C:plasma membrane"/>
    <property type="evidence" value="ECO:0000314"/>
    <property type="project" value="EcoCyc"/>
</dbReference>
<dbReference type="GO" id="GO:0015499">
    <property type="term" value="F:formate transmembrane transporter activity"/>
    <property type="evidence" value="ECO:0000269"/>
    <property type="project" value="EcoCyc"/>
</dbReference>
<dbReference type="GO" id="GO:0015724">
    <property type="term" value="P:formate transport"/>
    <property type="evidence" value="ECO:0000269"/>
    <property type="project" value="EcoCyc"/>
</dbReference>
<dbReference type="GO" id="GO:0019664">
    <property type="term" value="P:mixed acid fermentation"/>
    <property type="evidence" value="ECO:0000315"/>
    <property type="project" value="EcoCyc"/>
</dbReference>
<dbReference type="FunFam" id="1.20.1080.10:FF:000028">
    <property type="entry name" value="Probable formate transporter 2"/>
    <property type="match status" value="1"/>
</dbReference>
<dbReference type="Gene3D" id="1.20.1080.10">
    <property type="entry name" value="Glycerol uptake facilitator protein"/>
    <property type="match status" value="1"/>
</dbReference>
<dbReference type="InterPro" id="IPR023271">
    <property type="entry name" value="Aquaporin-like"/>
</dbReference>
<dbReference type="InterPro" id="IPR000292">
    <property type="entry name" value="For/NO2_transpt"/>
</dbReference>
<dbReference type="InterPro" id="IPR024002">
    <property type="entry name" value="For/NO2_transpt_CS"/>
</dbReference>
<dbReference type="NCBIfam" id="TIGR00790">
    <property type="entry name" value="fnt"/>
    <property type="match status" value="1"/>
</dbReference>
<dbReference type="NCBIfam" id="NF007261">
    <property type="entry name" value="PRK09713.1"/>
    <property type="match status" value="1"/>
</dbReference>
<dbReference type="PANTHER" id="PTHR30520:SF10">
    <property type="entry name" value="FORMATE CHANNEL FOCA-RELATED"/>
    <property type="match status" value="1"/>
</dbReference>
<dbReference type="PANTHER" id="PTHR30520">
    <property type="entry name" value="FORMATE TRANSPORTER-RELATED"/>
    <property type="match status" value="1"/>
</dbReference>
<dbReference type="Pfam" id="PF01226">
    <property type="entry name" value="Form_Nir_trans"/>
    <property type="match status" value="1"/>
</dbReference>
<dbReference type="PROSITE" id="PS01005">
    <property type="entry name" value="FORMATE_NITRITE_TP_1"/>
    <property type="match status" value="1"/>
</dbReference>
<dbReference type="PROSITE" id="PS01006">
    <property type="entry name" value="FORMATE_NITRITE_TP_2"/>
    <property type="match status" value="1"/>
</dbReference>
<keyword id="KW-0997">Cell inner membrane</keyword>
<keyword id="KW-1003">Cell membrane</keyword>
<keyword id="KW-0472">Membrane</keyword>
<keyword id="KW-1185">Reference proteome</keyword>
<keyword id="KW-0812">Transmembrane</keyword>
<keyword id="KW-1133">Transmembrane helix</keyword>
<keyword id="KW-0813">Transport</keyword>
<comment type="function">
    <text evidence="3">Involved in the bidirectional transport of formate during mixed-acid fermentation.</text>
</comment>
<comment type="catalytic activity">
    <reaction evidence="3">
        <text>formate(in) = formate(out)</text>
        <dbReference type="Rhea" id="RHEA:29679"/>
        <dbReference type="ChEBI" id="CHEBI:15740"/>
    </reaction>
</comment>
<comment type="activity regulation">
    <text evidence="3">The direction of formate translocation depends on external pH and electron donor source.</text>
</comment>
<comment type="subcellular location">
    <subcellularLocation>
        <location evidence="2">Cell inner membrane</location>
        <topology evidence="1">Multi-pass membrane protein</topology>
    </subcellularLocation>
</comment>
<comment type="disruption phenotype">
    <text evidence="3">When both FocA and FocB are missing, an unidentified system can transport formate.</text>
</comment>
<comment type="similarity">
    <text evidence="6">Belongs to the FNT transporter (TC 1.A.16) family.</text>
</comment>